<feature type="signal peptide" evidence="1">
    <location>
        <begin position="1"/>
        <end position="24"/>
    </location>
</feature>
<feature type="propeptide" id="PRO_0000439291" evidence="7">
    <location>
        <begin position="25"/>
        <end position="29"/>
    </location>
</feature>
<feature type="peptide" id="PRO_5002112072" description="Con-Ins G1 B chain" evidence="2">
    <location>
        <begin position="30"/>
        <end position="52"/>
    </location>
</feature>
<feature type="propeptide" id="PRO_0000439292" description="C peptide" evidence="2">
    <location>
        <begin position="53"/>
        <end position="94"/>
    </location>
</feature>
<feature type="peptide" id="PRO_0000439293" description="Con-Ins G1a A chain" evidence="2">
    <location>
        <begin position="95"/>
        <end position="114"/>
    </location>
</feature>
<feature type="modified residue" description="4-hydroxyproline; partial" evidence="2">
    <location>
        <position position="34"/>
    </location>
</feature>
<feature type="modified residue" description="4-carboxyglutamate" evidence="2">
    <location>
        <position position="41"/>
    </location>
</feature>
<feature type="modified residue" description="4-carboxyglutamate" evidence="2">
    <location>
        <position position="98"/>
    </location>
</feature>
<feature type="modified residue" description="4-hydroxyproline; partial" evidence="2">
    <location>
        <position position="104"/>
    </location>
</feature>
<feature type="modified residue" description="4-carboxyglutamate; partial" evidence="2">
    <location>
        <position position="109"/>
    </location>
</feature>
<feature type="modified residue" description="Cysteine amide" evidence="2">
    <location>
        <position position="114"/>
    </location>
</feature>
<feature type="disulfide bond" description="Interchain (between B and A chains)" evidence="3 9">
    <location>
        <begin position="38"/>
        <end position="101"/>
    </location>
</feature>
<feature type="disulfide bond" description="Interchain (between B and A chains)" evidence="3 9">
    <location>
        <begin position="50"/>
        <end position="114"/>
    </location>
</feature>
<feature type="disulfide bond" evidence="3 9">
    <location>
        <begin position="100"/>
        <end position="105"/>
    </location>
</feature>
<feature type="helix" evidence="10">
    <location>
        <begin position="96"/>
        <end position="100"/>
    </location>
</feature>
<feature type="turn" evidence="10">
    <location>
        <begin position="101"/>
        <end position="104"/>
    </location>
</feature>
<feature type="helix" evidence="10">
    <location>
        <begin position="107"/>
        <end position="110"/>
    </location>
</feature>
<feature type="helix" evidence="10">
    <location>
        <begin position="111"/>
        <end position="113"/>
    </location>
</feature>
<protein>
    <recommendedName>
        <fullName evidence="5">Con-Ins G1a</fullName>
    </recommendedName>
    <alternativeName>
        <fullName evidence="8">Insulin 1</fullName>
    </alternativeName>
    <component>
        <recommendedName>
            <fullName evidence="5">Con-Ins G1 B chain</fullName>
        </recommendedName>
    </component>
    <component>
        <recommendedName>
            <fullName evidence="5">Con-Ins G1a A chain</fullName>
        </recommendedName>
    </component>
</protein>
<accession>A0A0B5AC95</accession>
<evidence type="ECO:0000255" key="1"/>
<evidence type="ECO:0000269" key="2">
    <source>
    </source>
</evidence>
<evidence type="ECO:0000269" key="3">
    <source>
    </source>
</evidence>
<evidence type="ECO:0000269" key="4">
    <source>
    </source>
</evidence>
<evidence type="ECO:0000303" key="5">
    <source>
    </source>
</evidence>
<evidence type="ECO:0000305" key="6"/>
<evidence type="ECO:0000305" key="7">
    <source>
    </source>
</evidence>
<evidence type="ECO:0000312" key="8">
    <source>
        <dbReference type="EMBL" id="AJD85832.1"/>
    </source>
</evidence>
<evidence type="ECO:0007744" key="9">
    <source>
        <dbReference type="PDB" id="5JYQ"/>
    </source>
</evidence>
<evidence type="ECO:0007829" key="10">
    <source>
        <dbReference type="PDB" id="5JYQ"/>
    </source>
</evidence>
<comment type="function">
    <text evidence="2 3 4">This venom insulin, from a fish-hunting cone snail, facilitates prey capture by rapidly inducing hypoglycemic shock (PubMed:25605914, PubMed:27617429). It is one of the smallest known insulin found in nature and lacks the C-terminal segment of the B chain that, in human insulin, mediates engagement of the insulin receptor (INSR) and assembly of the hormone's hexameric storage form (PubMed:27617429). Despite lacking this segment, it both binds and activates human insulin receptor (long isoform (HIR-B)) with a high potency (EC(50)=16.28 nM) (PubMed:27617429, PubMed:30747102). In vivo, intraperitoneal injection of this peptide into zebrafish lowers blood glucose with the same potency than human insulin (PubMed:25605914, PubMed:30747102). In addition, when applied to water, this peptide reduces overall locomotor activity of zebrafish larvae, observed as a significant decrease in the percentage of time spent swimming and movement frequency (PubMed:25605914). When tested on a mouse model of diabetes, this insulin also lowers blood glucose with a 10-fold lower potency than human insulin (PubMed:30747102).</text>
</comment>
<comment type="subunit">
    <text evidence="3">Heterodimer of A and B chains; disulfide-linked.</text>
</comment>
<comment type="subcellular location">
    <subcellularLocation>
        <location evidence="2">Secreted</location>
    </subcellularLocation>
</comment>
<comment type="tissue specificity">
    <text evidence="7">Expressed by the venom gland.</text>
</comment>
<comment type="mass spectrometry" mass="5030.1" method="Electrospray" evidence="2">
    <text>with 1 hydroxyPro (residue 34) and with 3 carboxyglutamate (residues 41, 98 and 109). The measured ranges are 30-52, 95-114.</text>
</comment>
<comment type="mass spectrometry" mass="5046.1" method="Electrospray" evidence="2">
    <text>with 2 hydroxyPro (residues 34 and 104) and with 3 carboxyglutamate (residues 41, 98 and 109). The measured ranges are 30-52, 95-114.</text>
</comment>
<comment type="mass spectrometry" mass="5014.1" method="Electrospray" evidence="2">
    <text>without hydroxyPro and with 3 carboxyglutamate (residues 41, 98 and 109). The measured ranges are 30-52, 95-114.</text>
</comment>
<comment type="miscellaneous">
    <text evidence="7">Venom insulins constitute about 1/25 of the total venom of C.geographus.</text>
</comment>
<comment type="similarity">
    <text evidence="6">Belongs to the insulin family.</text>
</comment>
<comment type="online information" name="Protein Spotlight">
    <link uri="https://www.proteinspotlight.org/back_issues/191/"/>
    <text>Sweet poison - Issue 191 of May 2017</text>
</comment>
<name>INS1A_CONGE</name>
<reference key="1">
    <citation type="journal article" date="2015" name="Proc. Natl. Acad. Sci. U.S.A.">
        <title>Specialized insulin is used for chemical warfare by fish-hunting cone snails.</title>
        <authorList>
            <person name="Safavi-Hemami H."/>
            <person name="Gajewiak J."/>
            <person name="Karanth S."/>
            <person name="Robinson S.D."/>
            <person name="Ueberheide B."/>
            <person name="Douglass A.D."/>
            <person name="Schlegel A."/>
            <person name="Imperial J.S."/>
            <person name="Watkins M."/>
            <person name="Bandyopadhyay P.K."/>
            <person name="Yandell M."/>
            <person name="Li Q."/>
            <person name="Purcell A.W."/>
            <person name="Norton R.S."/>
            <person name="Ellgaard L."/>
            <person name="Olivera B.M."/>
        </authorList>
    </citation>
    <scope>NUCLEOTIDE SEQUENCE [MRNA]</scope>
    <scope>PROTEIN SEQUENCE OF 30-52 AND 95-114</scope>
    <scope>MASS SPECTROMETRY</scope>
    <scope>HYDROXYLATION AT PRO-34 AND PRO-104</scope>
    <scope>GAMMA-CARBOXYGLUTAMATION AT GLU-41; GLU-98 AND GLU-109</scope>
    <scope>AMIDATION AT CYS-114</scope>
    <scope>SYNTHESIS OF 30-52 AND 95-114</scope>
    <scope>SUBCELLULAR LOCATION</scope>
    <scope>BIOASSAY</scope>
    <source>
        <tissue>Venom</tissue>
        <tissue>Venom gland</tissue>
    </source>
</reference>
<reference key="2">
    <citation type="journal article" date="2019" name="Elife">
        <title>Fish-hunting cone snail venoms are a rich source of minimized ligands of the vertebrate insulin receptor.</title>
        <authorList>
            <person name="Ahorukomeye P."/>
            <person name="Disotuar M.M."/>
            <person name="Gajewiak J."/>
            <person name="Karanth S."/>
            <person name="Watkins M."/>
            <person name="Robinson S.D."/>
            <person name="Florez Salcedo P."/>
            <person name="Smith N.A."/>
            <person name="Smith B.J."/>
            <person name="Schlegel A."/>
            <person name="Forbes B.E."/>
            <person name="Olivera B."/>
            <person name="Hung-Chieh Chou D."/>
            <person name="Safavi-Hemami H."/>
        </authorList>
    </citation>
    <scope>FUNCTION</scope>
    <scope>SYNTHESIS OF 30-52 AND 95-114</scope>
    <scope>3D-STRUCTURE MODELING IN COMPLEX WITH HUMAN INSULIN RECEPTOR</scope>
</reference>
<reference key="3">
    <citation type="journal article" date="2016" name="Nat. Struct. Mol. Biol.">
        <title>A minimized human insulin-receptor-binding motif revealed in a Conus geographus venom insulin.</title>
        <authorList>
            <person name="Menting J.G."/>
            <person name="Gajewiak J."/>
            <person name="MacRaild C.A."/>
            <person name="Chou D.H."/>
            <person name="Disotuar M.M."/>
            <person name="Smith N.A."/>
            <person name="Miller C."/>
            <person name="Erchegyi J."/>
            <person name="Rivier J.E."/>
            <person name="Olivera B.M."/>
            <person name="Forbes B.E."/>
            <person name="Smith B.J."/>
            <person name="Norton R.S."/>
            <person name="Safavi-Hemami H."/>
            <person name="Lawrence M.C."/>
        </authorList>
    </citation>
    <scope>X-RAY CRYSTALLOGRAPHY (1.95 ANGSTROMS) OF 30-52 AND 95-114</scope>
    <scope>FUNCTION</scope>
    <scope>DISULFIDE BONDS</scope>
    <scope>SYNTHESIS OF 30-52 AND 95-114</scope>
    <scope>SUBUNIT</scope>
</reference>
<organism>
    <name type="scientific">Conus geographus</name>
    <name type="common">Geography cone</name>
    <name type="synonym">Nubecula geographus</name>
    <dbReference type="NCBI Taxonomy" id="6491"/>
    <lineage>
        <taxon>Eukaryota</taxon>
        <taxon>Metazoa</taxon>
        <taxon>Spiralia</taxon>
        <taxon>Lophotrochozoa</taxon>
        <taxon>Mollusca</taxon>
        <taxon>Gastropoda</taxon>
        <taxon>Caenogastropoda</taxon>
        <taxon>Neogastropoda</taxon>
        <taxon>Conoidea</taxon>
        <taxon>Conidae</taxon>
        <taxon>Conus</taxon>
        <taxon>Gastridium</taxon>
    </lineage>
</organism>
<sequence length="115" mass="13134">MTTSSYFLLMALGLLLYVCQSSFGNQHTRTFDTPKHRCGSEITNSYMDLCYRKRNDAGEKRGRASPLWQRRGSLSKLKARAKRNGAFHLPRDGRGVVEHCCHRPCSNAEFKKYCG</sequence>
<keyword id="KW-0002">3D-structure</keyword>
<keyword id="KW-0027">Amidation</keyword>
<keyword id="KW-0119">Carbohydrate metabolism</keyword>
<keyword id="KW-0165">Cleavage on pair of basic residues</keyword>
<keyword id="KW-0903">Direct protein sequencing</keyword>
<keyword id="KW-1015">Disulfide bond</keyword>
<keyword id="KW-0301">Gamma-carboxyglutamic acid</keyword>
<keyword id="KW-0313">Glucose metabolism</keyword>
<keyword id="KW-0372">Hormone</keyword>
<keyword id="KW-0379">Hydroxylation</keyword>
<keyword id="KW-0964">Secreted</keyword>
<keyword id="KW-0732">Signal</keyword>
<keyword id="KW-0800">Toxin</keyword>
<dbReference type="EMBL" id="KP268599">
    <property type="protein sequence ID" value="AJD85832.1"/>
    <property type="molecule type" value="mRNA"/>
</dbReference>
<dbReference type="PDB" id="5JYQ">
    <property type="method" value="X-ray"/>
    <property type="resolution" value="1.95 A"/>
    <property type="chains" value="A=95-114, B=30-52"/>
</dbReference>
<dbReference type="PDB" id="6VEQ">
    <property type="method" value="X-ray"/>
    <property type="resolution" value="3.25 A"/>
    <property type="chains" value="A/G=95-114"/>
</dbReference>
<dbReference type="PDBsum" id="5JYQ"/>
<dbReference type="PDBsum" id="6VEQ"/>
<dbReference type="SMR" id="A0A0B5AC95"/>
<dbReference type="GO" id="GO:0005576">
    <property type="term" value="C:extracellular region"/>
    <property type="evidence" value="ECO:0007669"/>
    <property type="project" value="UniProtKB-SubCell"/>
</dbReference>
<dbReference type="GO" id="GO:0005179">
    <property type="term" value="F:hormone activity"/>
    <property type="evidence" value="ECO:0007669"/>
    <property type="project" value="UniProtKB-KW"/>
</dbReference>
<dbReference type="GO" id="GO:0090729">
    <property type="term" value="F:toxin activity"/>
    <property type="evidence" value="ECO:0007669"/>
    <property type="project" value="UniProtKB-KW"/>
</dbReference>
<dbReference type="GO" id="GO:0006006">
    <property type="term" value="P:glucose metabolic process"/>
    <property type="evidence" value="ECO:0007669"/>
    <property type="project" value="UniProtKB-KW"/>
</dbReference>
<dbReference type="Gene3D" id="1.10.100.10">
    <property type="entry name" value="Insulin-like"/>
    <property type="match status" value="1"/>
</dbReference>
<dbReference type="InterPro" id="IPR016179">
    <property type="entry name" value="Insulin-like"/>
</dbReference>
<dbReference type="InterPro" id="IPR036438">
    <property type="entry name" value="Insulin-like_sf"/>
</dbReference>
<dbReference type="InterPro" id="IPR022353">
    <property type="entry name" value="Insulin_CS"/>
</dbReference>
<dbReference type="InterPro" id="IPR022352">
    <property type="entry name" value="Insulin_family"/>
</dbReference>
<dbReference type="Pfam" id="PF00049">
    <property type="entry name" value="Insulin"/>
    <property type="match status" value="1"/>
</dbReference>
<dbReference type="PRINTS" id="PR00276">
    <property type="entry name" value="INSULINFAMLY"/>
</dbReference>
<dbReference type="SMART" id="SM00078">
    <property type="entry name" value="IlGF"/>
    <property type="match status" value="1"/>
</dbReference>
<dbReference type="SUPFAM" id="SSF56994">
    <property type="entry name" value="Insulin-like"/>
    <property type="match status" value="1"/>
</dbReference>
<dbReference type="PROSITE" id="PS00262">
    <property type="entry name" value="INSULIN"/>
    <property type="match status" value="1"/>
</dbReference>
<proteinExistence type="evidence at protein level"/>